<comment type="subcellular location">
    <subcellularLocation>
        <location evidence="1">Cell membrane</location>
        <topology evidence="1">Lipid-anchor</topology>
    </subcellularLocation>
</comment>
<comment type="similarity">
    <text evidence="2">Belongs to the MG067/MG068/MG395 family.</text>
</comment>
<reference key="1">
    <citation type="journal article" date="1996" name="Nucleic Acids Res.">
        <title>Complete sequence analysis of the genome of the bacterium Mycoplasma pneumoniae.</title>
        <authorList>
            <person name="Himmelreich R."/>
            <person name="Hilbert H."/>
            <person name="Plagens H."/>
            <person name="Pirkl E."/>
            <person name="Li B.-C."/>
            <person name="Herrmann R."/>
        </authorList>
    </citation>
    <scope>NUCLEOTIDE SEQUENCE [LARGE SCALE GENOMIC DNA]</scope>
    <source>
        <strain>ATCC 29342 / M129 / Subtype 1</strain>
    </source>
</reference>
<accession>P75195</accession>
<sequence>MLVVFKRLGFIVSIFSLTFLSACAAFDKWQEFYINNIPSSTEIHRFNYDLNFSLTFTNRITSNGEAKFSVTYGTGWLIDWKEPDKKKENDPFRAYLATNLHVAASLINPQDYEPYKNKDDAGWTTTFRLGKYTKVSDFVSPNQFGLPNAAQALVNVQTSVIPKTAFAARDFVDYSFPQEQKDKEKRKQQWVKNSHTKNSDVQPFAEFAILEIPLFSKSKVDRKIFNHFIQPAIRTYKQLGDSLNIFANPTLDQLKQNRYYVLGYPFLKNKVSSLFLNQTGKKKGIFRRKYTNIPWKTSYYLN</sequence>
<name>Y585_MYCPN</name>
<evidence type="ECO:0000255" key="1">
    <source>
        <dbReference type="PROSITE-ProRule" id="PRU00303"/>
    </source>
</evidence>
<evidence type="ECO:0000305" key="2"/>
<dbReference type="EMBL" id="U00089">
    <property type="protein sequence ID" value="AAB95905.1"/>
    <property type="molecule type" value="Genomic_DNA"/>
</dbReference>
<dbReference type="PIR" id="S73583">
    <property type="entry name" value="S73583"/>
</dbReference>
<dbReference type="RefSeq" id="NP_110274.1">
    <property type="nucleotide sequence ID" value="NC_000912.1"/>
</dbReference>
<dbReference type="RefSeq" id="WP_010874942.1">
    <property type="nucleotide sequence ID" value="NZ_OU342337.1"/>
</dbReference>
<dbReference type="STRING" id="272634.MPN_585"/>
<dbReference type="EnsemblBacteria" id="AAB95905">
    <property type="protein sequence ID" value="AAB95905"/>
    <property type="gene ID" value="MPN_585"/>
</dbReference>
<dbReference type="KEGG" id="mpn:MPN_585"/>
<dbReference type="PATRIC" id="fig|272634.6.peg.648"/>
<dbReference type="HOGENOM" id="CLU_1048972_0_0_14"/>
<dbReference type="OrthoDB" id="395427at2"/>
<dbReference type="BioCyc" id="MPNE272634:G1GJ3-954-MONOMER"/>
<dbReference type="Proteomes" id="UP000000808">
    <property type="component" value="Chromosome"/>
</dbReference>
<dbReference type="GO" id="GO:0005886">
    <property type="term" value="C:plasma membrane"/>
    <property type="evidence" value="ECO:0007669"/>
    <property type="project" value="UniProtKB-SubCell"/>
</dbReference>
<dbReference type="InterPro" id="IPR022382">
    <property type="entry name" value="Mycoplasma_peptidase_DUF31"/>
</dbReference>
<dbReference type="InterPro" id="IPR022381">
    <property type="entry name" value="Uncharacterised_MG067"/>
</dbReference>
<dbReference type="Pfam" id="PF01732">
    <property type="entry name" value="Mycop_pep_DUF31"/>
    <property type="match status" value="1"/>
</dbReference>
<dbReference type="PRINTS" id="PR00840">
    <property type="entry name" value="Y06768FAMILY"/>
</dbReference>
<dbReference type="PROSITE" id="PS51257">
    <property type="entry name" value="PROKAR_LIPOPROTEIN"/>
    <property type="match status" value="1"/>
</dbReference>
<organism>
    <name type="scientific">Mycoplasma pneumoniae (strain ATCC 29342 / M129 / Subtype 1)</name>
    <name type="common">Mycoplasmoides pneumoniae</name>
    <dbReference type="NCBI Taxonomy" id="272634"/>
    <lineage>
        <taxon>Bacteria</taxon>
        <taxon>Bacillati</taxon>
        <taxon>Mycoplasmatota</taxon>
        <taxon>Mycoplasmoidales</taxon>
        <taxon>Mycoplasmoidaceae</taxon>
        <taxon>Mycoplasmoides</taxon>
    </lineage>
</organism>
<keyword id="KW-1003">Cell membrane</keyword>
<keyword id="KW-0449">Lipoprotein</keyword>
<keyword id="KW-0472">Membrane</keyword>
<keyword id="KW-0564">Palmitate</keyword>
<keyword id="KW-1185">Reference proteome</keyword>
<keyword id="KW-0732">Signal</keyword>
<protein>
    <recommendedName>
        <fullName>Uncharacterized lipoprotein MPN_585</fullName>
    </recommendedName>
</protein>
<proteinExistence type="inferred from homology"/>
<feature type="signal peptide" evidence="1">
    <location>
        <begin position="1"/>
        <end position="22"/>
    </location>
</feature>
<feature type="chain" id="PRO_0000018741" description="Uncharacterized lipoprotein MPN_585">
    <location>
        <begin position="23"/>
        <end position="302"/>
    </location>
</feature>
<feature type="lipid moiety-binding region" description="N-palmitoyl cysteine" evidence="1">
    <location>
        <position position="23"/>
    </location>
</feature>
<feature type="lipid moiety-binding region" description="S-diacylglycerol cysteine" evidence="1">
    <location>
        <position position="23"/>
    </location>
</feature>
<gene>
    <name type="ordered locus">MPN_585</name>
    <name type="ORF">D02_orf302</name>
    <name type="ORF">MP257</name>
</gene>